<feature type="chain" id="PRO_0000050149" description="Exosome complex component Rrp4">
    <location>
        <begin position="1"/>
        <end position="311"/>
    </location>
</feature>
<feature type="domain" description="S1 motif" evidence="1">
    <location>
        <begin position="63"/>
        <end position="131"/>
    </location>
</feature>
<feature type="domain" description="KH" evidence="1">
    <location>
        <begin position="139"/>
        <end position="197"/>
    </location>
</feature>
<feature type="region of interest" description="Disordered" evidence="2">
    <location>
        <begin position="222"/>
        <end position="311"/>
    </location>
</feature>
<feature type="compositionally biased region" description="Acidic residues" evidence="2">
    <location>
        <begin position="241"/>
        <end position="300"/>
    </location>
</feature>
<feature type="compositionally biased region" description="Basic and acidic residues" evidence="2">
    <location>
        <begin position="301"/>
        <end position="311"/>
    </location>
</feature>
<proteinExistence type="inferred from homology"/>
<gene>
    <name evidence="1" type="primary">rrp4</name>
    <name type="ordered locus">MTH_684</name>
</gene>
<name>RRP4_METTH</name>
<evidence type="ECO:0000255" key="1">
    <source>
        <dbReference type="HAMAP-Rule" id="MF_00623"/>
    </source>
</evidence>
<evidence type="ECO:0000256" key="2">
    <source>
        <dbReference type="SAM" id="MobiDB-lite"/>
    </source>
</evidence>
<reference key="1">
    <citation type="journal article" date="1997" name="J. Bacteriol.">
        <title>Complete genome sequence of Methanobacterium thermoautotrophicum deltaH: functional analysis and comparative genomics.</title>
        <authorList>
            <person name="Smith D.R."/>
            <person name="Doucette-Stamm L.A."/>
            <person name="Deloughery C."/>
            <person name="Lee H.-M."/>
            <person name="Dubois J."/>
            <person name="Aldredge T."/>
            <person name="Bashirzadeh R."/>
            <person name="Blakely D."/>
            <person name="Cook R."/>
            <person name="Gilbert K."/>
            <person name="Harrison D."/>
            <person name="Hoang L."/>
            <person name="Keagle P."/>
            <person name="Lumm W."/>
            <person name="Pothier B."/>
            <person name="Qiu D."/>
            <person name="Spadafora R."/>
            <person name="Vicare R."/>
            <person name="Wang Y."/>
            <person name="Wierzbowski J."/>
            <person name="Gibson R."/>
            <person name="Jiwani N."/>
            <person name="Caruso A."/>
            <person name="Bush D."/>
            <person name="Safer H."/>
            <person name="Patwell D."/>
            <person name="Prabhakar S."/>
            <person name="McDougall S."/>
            <person name="Shimer G."/>
            <person name="Goyal A."/>
            <person name="Pietrovski S."/>
            <person name="Church G.M."/>
            <person name="Daniels C.J."/>
            <person name="Mao J.-I."/>
            <person name="Rice P."/>
            <person name="Noelling J."/>
            <person name="Reeve J.N."/>
        </authorList>
    </citation>
    <scope>NUCLEOTIDE SEQUENCE [LARGE SCALE GENOMIC DNA]</scope>
    <source>
        <strain>ATCC 29096 / DSM 1053 / JCM 10044 / NBRC 100330 / Delta H</strain>
    </source>
</reference>
<organism>
    <name type="scientific">Methanothermobacter thermautotrophicus (strain ATCC 29096 / DSM 1053 / JCM 10044 / NBRC 100330 / Delta H)</name>
    <name type="common">Methanobacterium thermoautotrophicum</name>
    <dbReference type="NCBI Taxonomy" id="187420"/>
    <lineage>
        <taxon>Archaea</taxon>
        <taxon>Methanobacteriati</taxon>
        <taxon>Methanobacteriota</taxon>
        <taxon>Methanomada group</taxon>
        <taxon>Methanobacteria</taxon>
        <taxon>Methanobacteriales</taxon>
        <taxon>Methanobacteriaceae</taxon>
        <taxon>Methanothermobacter</taxon>
    </lineage>
</organism>
<protein>
    <recommendedName>
        <fullName evidence="1">Exosome complex component Rrp4</fullName>
    </recommendedName>
</protein>
<comment type="function">
    <text evidence="1">Non-catalytic component of the exosome, which is a complex involved in RNA degradation. Increases the RNA binding and the efficiency of RNA degradation. Confers strong poly(A) specificity to the exosome.</text>
</comment>
<comment type="subunit">
    <text evidence="1">Component of the archaeal exosome complex. Forms a trimer of Rrp4 and/or Csl4 subunits. The trimer associates with a hexameric ring-like arrangement composed of 3 Rrp41-Rrp42 heterodimers.</text>
</comment>
<comment type="subcellular location">
    <subcellularLocation>
        <location evidence="1">Cytoplasm</location>
    </subcellularLocation>
</comment>
<comment type="similarity">
    <text evidence="1">Belongs to the RRP4 family.</text>
</comment>
<keyword id="KW-0963">Cytoplasm</keyword>
<keyword id="KW-0271">Exosome</keyword>
<keyword id="KW-1185">Reference proteome</keyword>
<keyword id="KW-0694">RNA-binding</keyword>
<dbReference type="EMBL" id="AE000666">
    <property type="protein sequence ID" value="AAB85189.1"/>
    <property type="molecule type" value="Genomic_DNA"/>
</dbReference>
<dbReference type="PIR" id="B69191">
    <property type="entry name" value="B69191"/>
</dbReference>
<dbReference type="RefSeq" id="WP_010876323.1">
    <property type="nucleotide sequence ID" value="NC_000916.1"/>
</dbReference>
<dbReference type="SMR" id="O26780"/>
<dbReference type="IntAct" id="O26780">
    <property type="interactions" value="1"/>
</dbReference>
<dbReference type="STRING" id="187420.MTH_684"/>
<dbReference type="PaxDb" id="187420-MTH_684"/>
<dbReference type="EnsemblBacteria" id="AAB85189">
    <property type="protein sequence ID" value="AAB85189"/>
    <property type="gene ID" value="MTH_684"/>
</dbReference>
<dbReference type="GeneID" id="1470645"/>
<dbReference type="KEGG" id="mth:MTH_684"/>
<dbReference type="PATRIC" id="fig|187420.15.peg.665"/>
<dbReference type="HOGENOM" id="CLU_071769_0_0_2"/>
<dbReference type="InParanoid" id="O26780"/>
<dbReference type="Proteomes" id="UP000005223">
    <property type="component" value="Chromosome"/>
</dbReference>
<dbReference type="GO" id="GO:0005737">
    <property type="term" value="C:cytoplasm"/>
    <property type="evidence" value="ECO:0007669"/>
    <property type="project" value="UniProtKB-SubCell"/>
</dbReference>
<dbReference type="GO" id="GO:0000178">
    <property type="term" value="C:exosome (RNase complex)"/>
    <property type="evidence" value="ECO:0007669"/>
    <property type="project" value="UniProtKB-KW"/>
</dbReference>
<dbReference type="GO" id="GO:0008143">
    <property type="term" value="F:poly(A) binding"/>
    <property type="evidence" value="ECO:0007669"/>
    <property type="project" value="InterPro"/>
</dbReference>
<dbReference type="GO" id="GO:0071034">
    <property type="term" value="P:CUT catabolic process"/>
    <property type="evidence" value="ECO:0007669"/>
    <property type="project" value="TreeGrafter"/>
</dbReference>
<dbReference type="GO" id="GO:0000467">
    <property type="term" value="P:exonucleolytic trimming to generate mature 3'-end of 5.8S rRNA from tricistronic rRNA transcript (SSU-rRNA, 5.8S rRNA, LSU-rRNA)"/>
    <property type="evidence" value="ECO:0007669"/>
    <property type="project" value="TreeGrafter"/>
</dbReference>
<dbReference type="GO" id="GO:0071051">
    <property type="term" value="P:poly(A)-dependent snoRNA 3'-end processing"/>
    <property type="evidence" value="ECO:0007669"/>
    <property type="project" value="TreeGrafter"/>
</dbReference>
<dbReference type="GO" id="GO:0006401">
    <property type="term" value="P:RNA catabolic process"/>
    <property type="evidence" value="ECO:0007669"/>
    <property type="project" value="UniProtKB-UniRule"/>
</dbReference>
<dbReference type="GO" id="GO:0034475">
    <property type="term" value="P:U4 snRNA 3'-end processing"/>
    <property type="evidence" value="ECO:0007669"/>
    <property type="project" value="TreeGrafter"/>
</dbReference>
<dbReference type="CDD" id="cd22524">
    <property type="entry name" value="KH-I_Rrp4_prokar"/>
    <property type="match status" value="1"/>
</dbReference>
<dbReference type="CDD" id="cd05789">
    <property type="entry name" value="S1_Rrp4"/>
    <property type="match status" value="1"/>
</dbReference>
<dbReference type="Gene3D" id="2.40.50.100">
    <property type="match status" value="1"/>
</dbReference>
<dbReference type="Gene3D" id="3.30.1370.10">
    <property type="entry name" value="K Homology domain, type 1"/>
    <property type="match status" value="1"/>
</dbReference>
<dbReference type="Gene3D" id="2.40.50.140">
    <property type="entry name" value="Nucleic acid-binding proteins"/>
    <property type="match status" value="1"/>
</dbReference>
<dbReference type="HAMAP" id="MF_00623">
    <property type="entry name" value="Exosome_Rrp4"/>
    <property type="match status" value="1"/>
</dbReference>
<dbReference type="InterPro" id="IPR026699">
    <property type="entry name" value="Exosome_RNA_bind1/RRP40/RRP4"/>
</dbReference>
<dbReference type="InterPro" id="IPR004087">
    <property type="entry name" value="KH_dom"/>
</dbReference>
<dbReference type="InterPro" id="IPR004088">
    <property type="entry name" value="KH_dom_type_1"/>
</dbReference>
<dbReference type="InterPro" id="IPR036612">
    <property type="entry name" value="KH_dom_type_1_sf"/>
</dbReference>
<dbReference type="InterPro" id="IPR012340">
    <property type="entry name" value="NA-bd_OB-fold"/>
</dbReference>
<dbReference type="InterPro" id="IPR023474">
    <property type="entry name" value="Rrp4"/>
</dbReference>
<dbReference type="InterPro" id="IPR054371">
    <property type="entry name" value="RRP4_N"/>
</dbReference>
<dbReference type="InterPro" id="IPR048565">
    <property type="entry name" value="RRP4_S1"/>
</dbReference>
<dbReference type="InterPro" id="IPR003029">
    <property type="entry name" value="S1_domain"/>
</dbReference>
<dbReference type="NCBIfam" id="NF003181">
    <property type="entry name" value="PRK04163.1-1"/>
    <property type="match status" value="1"/>
</dbReference>
<dbReference type="PANTHER" id="PTHR21321:SF4">
    <property type="entry name" value="EXOSOME COMPLEX COMPONENT RRP4"/>
    <property type="match status" value="1"/>
</dbReference>
<dbReference type="PANTHER" id="PTHR21321">
    <property type="entry name" value="PNAS-3 RELATED"/>
    <property type="match status" value="1"/>
</dbReference>
<dbReference type="Pfam" id="PF22625">
    <property type="entry name" value="ECR1_N_2"/>
    <property type="match status" value="1"/>
</dbReference>
<dbReference type="Pfam" id="PF15985">
    <property type="entry name" value="KH_6"/>
    <property type="match status" value="1"/>
</dbReference>
<dbReference type="SMART" id="SM00322">
    <property type="entry name" value="KH"/>
    <property type="match status" value="1"/>
</dbReference>
<dbReference type="SMART" id="SM00316">
    <property type="entry name" value="S1"/>
    <property type="match status" value="1"/>
</dbReference>
<dbReference type="SUPFAM" id="SSF54791">
    <property type="entry name" value="Eukaryotic type KH-domain (KH-domain type I)"/>
    <property type="match status" value="1"/>
</dbReference>
<dbReference type="SUPFAM" id="SSF50249">
    <property type="entry name" value="Nucleic acid-binding proteins"/>
    <property type="match status" value="1"/>
</dbReference>
<dbReference type="SUPFAM" id="SSF110324">
    <property type="entry name" value="Ribosomal L27 protein-like"/>
    <property type="match status" value="1"/>
</dbReference>
<dbReference type="PROSITE" id="PS50084">
    <property type="entry name" value="KH_TYPE_1"/>
    <property type="match status" value="1"/>
</dbReference>
<dbReference type="PROSITE" id="PS50126">
    <property type="entry name" value="S1"/>
    <property type="match status" value="1"/>
</dbReference>
<accession>O26780</accession>
<sequence>MLLVNEKDLVVPGQVLAENEYFPGRGTFKEDNRICSSFVGLVSVRNKKINVIPLQSKYIPKRGDVVIGEITDIRFSMWGLDINSPYTGLLPASEVFGKDKRELESVFDIVDVLLLRVVDVDEVKKVKLGLKGRGLGKFRDGILVYITPTKVPRLIGKRGSMINMVKEKTHCDIVVGQNGVVWIKGEPDMERIAEKVVLMIDREAHTSGLTDRVRELLDRLTGVEPEIQVEESEGTEKPETPESEDFEEASDYSEDVEVSPESEDIEEVSDESEDLEVESEDVEEGTDTPAAEEDDGEAGDAEVKDENNSER</sequence>